<dbReference type="EMBL" id="X13439">
    <property type="protein sequence ID" value="CAA31791.1"/>
    <property type="molecule type" value="Genomic_DNA"/>
</dbReference>
<dbReference type="PIR" id="S06444">
    <property type="entry name" value="PWKQ6"/>
</dbReference>
<dbReference type="SMR" id="P14862"/>
<dbReference type="GO" id="GO:0005743">
    <property type="term" value="C:mitochondrial inner membrane"/>
    <property type="evidence" value="ECO:0007669"/>
    <property type="project" value="UniProtKB-SubCell"/>
</dbReference>
<dbReference type="GO" id="GO:0045259">
    <property type="term" value="C:proton-transporting ATP synthase complex"/>
    <property type="evidence" value="ECO:0007669"/>
    <property type="project" value="UniProtKB-KW"/>
</dbReference>
<dbReference type="GO" id="GO:0046933">
    <property type="term" value="F:proton-transporting ATP synthase activity, rotational mechanism"/>
    <property type="evidence" value="ECO:0007669"/>
    <property type="project" value="TreeGrafter"/>
</dbReference>
<dbReference type="CDD" id="cd00310">
    <property type="entry name" value="ATP-synt_Fo_a_6"/>
    <property type="match status" value="1"/>
</dbReference>
<dbReference type="FunFam" id="1.20.120.220:FF:000003">
    <property type="entry name" value="ATP synthase subunit a"/>
    <property type="match status" value="1"/>
</dbReference>
<dbReference type="Gene3D" id="1.20.120.220">
    <property type="entry name" value="ATP synthase, F0 complex, subunit A"/>
    <property type="match status" value="1"/>
</dbReference>
<dbReference type="HAMAP" id="MF_01393">
    <property type="entry name" value="ATP_synth_a_bact"/>
    <property type="match status" value="1"/>
</dbReference>
<dbReference type="InterPro" id="IPR000568">
    <property type="entry name" value="ATP_synth_F0_asu"/>
</dbReference>
<dbReference type="InterPro" id="IPR023011">
    <property type="entry name" value="ATP_synth_F0_asu_AS"/>
</dbReference>
<dbReference type="InterPro" id="IPR045083">
    <property type="entry name" value="ATP_synth_F0_asu_bact/mt"/>
</dbReference>
<dbReference type="InterPro" id="IPR035908">
    <property type="entry name" value="F0_ATP_A_sf"/>
</dbReference>
<dbReference type="NCBIfam" id="TIGR01131">
    <property type="entry name" value="ATP_synt_6_or_A"/>
    <property type="match status" value="1"/>
</dbReference>
<dbReference type="NCBIfam" id="NF004482">
    <property type="entry name" value="PRK05815.2-4"/>
    <property type="match status" value="1"/>
</dbReference>
<dbReference type="PANTHER" id="PTHR11410">
    <property type="entry name" value="ATP SYNTHASE SUBUNIT A"/>
    <property type="match status" value="1"/>
</dbReference>
<dbReference type="PANTHER" id="PTHR11410:SF0">
    <property type="entry name" value="ATP SYNTHASE SUBUNIT A"/>
    <property type="match status" value="1"/>
</dbReference>
<dbReference type="Pfam" id="PF00119">
    <property type="entry name" value="ATP-synt_A"/>
    <property type="match status" value="1"/>
</dbReference>
<dbReference type="PRINTS" id="PR00123">
    <property type="entry name" value="ATPASEA"/>
</dbReference>
<dbReference type="SUPFAM" id="SSF81336">
    <property type="entry name" value="F1F0 ATP synthase subunit A"/>
    <property type="match status" value="1"/>
</dbReference>
<dbReference type="PROSITE" id="PS00449">
    <property type="entry name" value="ATPASE_A"/>
    <property type="match status" value="1"/>
</dbReference>
<accession>P14862</accession>
<protein>
    <recommendedName>
        <fullName>ATP synthase subunit a</fullName>
    </recommendedName>
    <alternativeName>
        <fullName>F-ATPase protein 6</fullName>
    </alternativeName>
</protein>
<name>ATP6_COCHE</name>
<comment type="function">
    <text>Mitochondrial membrane ATP synthase (F(1)F(0) ATP synthase or Complex V) produces ATP from ADP in the presence of a proton gradient across the membrane which is generated by electron transport complexes of the respiratory chain. F-type ATPases consist of two structural domains, F(1) - containing the extramembraneous catalytic core and F(0) - containing the membrane proton channel, linked together by a central stalk and a peripheral stalk. During catalysis, ATP synthesis in the catalytic domain of F(1) is coupled via a rotary mechanism of the central stalk subunits to proton translocation. Key component of the proton channel; it may play a direct role in the translocation of protons across the membrane.</text>
</comment>
<comment type="subunit">
    <text>F-type ATPases have 2 components, CF(1) - the catalytic core - and CF(0) - the membrane proton channel. CF(1) has five subunits: alpha(3), beta(3), gamma(1), delta(1), epsilon(1). CF(0) has three main subunits: a, b and c.</text>
</comment>
<comment type="subcellular location">
    <subcellularLocation>
        <location>Mitochondrion inner membrane</location>
        <topology>Multi-pass membrane protein</topology>
    </subcellularLocation>
</comment>
<comment type="similarity">
    <text evidence="2">Belongs to the ATPase A chain family.</text>
</comment>
<organism>
    <name type="scientific">Cochliobolus heterostrophus</name>
    <name type="common">Southern corn leaf blight fungus</name>
    <name type="synonym">Bipolaris maydis</name>
    <dbReference type="NCBI Taxonomy" id="5016"/>
    <lineage>
        <taxon>Eukaryota</taxon>
        <taxon>Fungi</taxon>
        <taxon>Dikarya</taxon>
        <taxon>Ascomycota</taxon>
        <taxon>Pezizomycotina</taxon>
        <taxon>Dothideomycetes</taxon>
        <taxon>Pleosporomycetidae</taxon>
        <taxon>Pleosporales</taxon>
        <taxon>Pleosporineae</taxon>
        <taxon>Pleosporaceae</taxon>
        <taxon>Bipolaris</taxon>
    </lineage>
</organism>
<keyword id="KW-0066">ATP synthesis</keyword>
<keyword id="KW-0138">CF(0)</keyword>
<keyword id="KW-0375">Hydrogen ion transport</keyword>
<keyword id="KW-0406">Ion transport</keyword>
<keyword id="KW-0472">Membrane</keyword>
<keyword id="KW-0496">Mitochondrion</keyword>
<keyword id="KW-0999">Mitochondrion inner membrane</keyword>
<keyword id="KW-0812">Transmembrane</keyword>
<keyword id="KW-1133">Transmembrane helix</keyword>
<keyword id="KW-0813">Transport</keyword>
<proteinExistence type="inferred from homology"/>
<geneLocation type="mitochondrion"/>
<evidence type="ECO:0000255" key="1"/>
<evidence type="ECO:0000305" key="2"/>
<sequence>MFKYQTILSPLDQFEIRNLFSIDTPLLANMNLSITNIGLYMTIAAFIAFYFSILATNHSKITPNKWSLSQETLYATIHSIVVNQINNKNGQAYFPFMYTLFIFILINNLIGMVPYSFASTSHFILTFSLSFTVVLGATVLGFKEHGLKFFSLFVPAGCPLGLLPLLVLIEFISYLARNVSLGLRLAANILSGHMLLNILSGFTYNIMSSGIIFFILGLLPLAFIIAFSGLELGIAFIQSQVFVVLSCSYIKDALELH</sequence>
<reference key="1">
    <citation type="journal article" date="1988" name="Nucleic Acids Res.">
        <title>Nucleotide sequence of a fungal plasmid-like DNA containing the mitochondrial ATPase subunit 6 gene.</title>
        <authorList>
            <person name="Lin J.J."/>
            <person name="Garber R.C."/>
            <person name="Yoder O.C."/>
        </authorList>
    </citation>
    <scope>NUCLEOTIDE SEQUENCE [GENOMIC DNA]</scope>
    <source>
        <strain>T40</strain>
    </source>
</reference>
<gene>
    <name type="primary">ATP6</name>
</gene>
<feature type="chain" id="PRO_0000082108" description="ATP synthase subunit a">
    <location>
        <begin position="1"/>
        <end position="257"/>
    </location>
</feature>
<feature type="transmembrane region" description="Helical" evidence="1">
    <location>
        <begin position="34"/>
        <end position="54"/>
    </location>
</feature>
<feature type="transmembrane region" description="Helical" evidence="1">
    <location>
        <begin position="93"/>
        <end position="113"/>
    </location>
</feature>
<feature type="transmembrane region" description="Helical" evidence="1">
    <location>
        <begin position="122"/>
        <end position="142"/>
    </location>
</feature>
<feature type="transmembrane region" description="Helical" evidence="1">
    <location>
        <begin position="149"/>
        <end position="169"/>
    </location>
</feature>
<feature type="transmembrane region" description="Helical" evidence="1">
    <location>
        <begin position="187"/>
        <end position="207"/>
    </location>
</feature>
<feature type="transmembrane region" description="Helical" evidence="1">
    <location>
        <begin position="210"/>
        <end position="230"/>
    </location>
</feature>